<organism>
    <name type="scientific">Conus imperialis</name>
    <name type="common">Imperial cone</name>
    <dbReference type="NCBI Taxonomy" id="35631"/>
    <lineage>
        <taxon>Eukaryota</taxon>
        <taxon>Metazoa</taxon>
        <taxon>Spiralia</taxon>
        <taxon>Lophotrochozoa</taxon>
        <taxon>Mollusca</taxon>
        <taxon>Gastropoda</taxon>
        <taxon>Caenogastropoda</taxon>
        <taxon>Neogastropoda</taxon>
        <taxon>Conoidea</taxon>
        <taxon>Conidae</taxon>
        <taxon>Conus</taxon>
        <taxon>Stephanoconus</taxon>
    </lineage>
</organism>
<keyword id="KW-1015">Disulfide bond</keyword>
<keyword id="KW-0960">Knottin</keyword>
<keyword id="KW-0528">Neurotoxin</keyword>
<keyword id="KW-0964">Secreted</keyword>
<keyword id="KW-0732">Signal</keyword>
<keyword id="KW-0800">Toxin</keyword>
<evidence type="ECO:0000255" key="1"/>
<evidence type="ECO:0000269" key="2">
    <source>
    </source>
</evidence>
<evidence type="ECO:0000303" key="3">
    <source>
    </source>
</evidence>
<evidence type="ECO:0000305" key="4"/>
<evidence type="ECO:0000305" key="5">
    <source>
    </source>
</evidence>
<evidence type="ECO:0000312" key="6">
    <source>
        <dbReference type="EMBL" id="AME17677.1"/>
    </source>
</evidence>
<accession>A0A125S9F3</accession>
<dbReference type="EMBL" id="KT377413">
    <property type="protein sequence ID" value="AME17677.1"/>
    <property type="molecule type" value="mRNA"/>
</dbReference>
<dbReference type="GO" id="GO:0005576">
    <property type="term" value="C:extracellular region"/>
    <property type="evidence" value="ECO:0007669"/>
    <property type="project" value="UniProtKB-SubCell"/>
</dbReference>
<dbReference type="GO" id="GO:0008200">
    <property type="term" value="F:ion channel inhibitor activity"/>
    <property type="evidence" value="ECO:0007669"/>
    <property type="project" value="InterPro"/>
</dbReference>
<dbReference type="GO" id="GO:0090729">
    <property type="term" value="F:toxin activity"/>
    <property type="evidence" value="ECO:0007669"/>
    <property type="project" value="UniProtKB-KW"/>
</dbReference>
<dbReference type="InterPro" id="IPR004214">
    <property type="entry name" value="Conotoxin"/>
</dbReference>
<dbReference type="Pfam" id="PF02950">
    <property type="entry name" value="Conotoxin"/>
    <property type="match status" value="1"/>
</dbReference>
<feature type="signal peptide" evidence="1">
    <location>
        <begin position="1"/>
        <end position="19"/>
    </location>
</feature>
<feature type="propeptide" id="PRO_0000451005" evidence="4">
    <location>
        <begin position="20"/>
        <end position="45"/>
    </location>
</feature>
<feature type="chain" id="PRO_5007179721" description="Conotoxin Im6.9" evidence="4">
    <location>
        <begin position="46"/>
        <end position="76"/>
    </location>
</feature>
<feature type="disulfide bond" evidence="4">
    <location>
        <begin position="51"/>
        <end position="65"/>
    </location>
</feature>
<feature type="disulfide bond" evidence="4">
    <location>
        <begin position="58"/>
        <end position="69"/>
    </location>
</feature>
<feature type="disulfide bond" evidence="4">
    <location>
        <begin position="64"/>
        <end position="73"/>
    </location>
</feature>
<proteinExistence type="evidence at protein level"/>
<sequence length="76" mass="8744">MEKLTILLLVTAVLMSTQALMQSGIEKRQRAKIKFFSKRKTTAERWWEGECYDWLRQCSSPAQCCSGNCGAHCKAW</sequence>
<protein>
    <recommendedName>
        <fullName evidence="4">Conotoxin Im6.9</fullName>
    </recommendedName>
    <alternativeName>
        <fullName evidence="3 6">Conopeptide im019</fullName>
    </alternativeName>
</protein>
<comment type="function">
    <text evidence="4">Probable neurotoxin.</text>
</comment>
<comment type="subcellular location">
    <subcellularLocation>
        <location evidence="2">Secreted</location>
    </subcellularLocation>
</comment>
<comment type="tissue specificity">
    <text evidence="5">Expressed by the venom duct.</text>
</comment>
<comment type="domain">
    <text evidence="4">The presence of a 'disulfide through disulfide knot' structurally defines this protein as a knottin.</text>
</comment>
<comment type="domain">
    <text evidence="4">The cysteine framework is VI/VII (C-C-CC-C-C).</text>
</comment>
<comment type="similarity">
    <text evidence="4">Belongs to the conotoxin O2 superfamily.</text>
</comment>
<reference key="1">
    <citation type="journal article" date="2019" name="Mar. Drugs">
        <title>Transcriptomic-proteomic correlation in the predation-evoked venom of the cone snail, Conus imperialis.</title>
        <authorList>
            <person name="Jin A.H."/>
            <person name="Dutertre S."/>
            <person name="Dutt M."/>
            <person name="Lavergne V."/>
            <person name="Jones A."/>
            <person name="Lewis R.J."/>
            <person name="Alewood P.F."/>
        </authorList>
    </citation>
    <scope>NUCLEOTIDE SEQUENCE [MRNA]</scope>
    <scope>IDENTIFICATION BY MASS SPECTROMETRY</scope>
    <scope>SUBCELLULAR LOCATION</scope>
    <source>
        <tissue>Venom</tissue>
        <tissue>Venom duct</tissue>
    </source>
</reference>
<name>O269_CONIM</name>